<reference key="1">
    <citation type="journal article" date="2008" name="ISME J.">
        <title>Comparative genomics of two ecotypes of the marine planktonic copiotroph Alteromonas macleodii suggests alternative lifestyles associated with different kinds of particulate organic matter.</title>
        <authorList>
            <person name="Ivars-Martinez E."/>
            <person name="Martin-Cuadrado A.-B."/>
            <person name="D'Auria G."/>
            <person name="Mira A."/>
            <person name="Ferriera S."/>
            <person name="Johnson J."/>
            <person name="Friedman R."/>
            <person name="Rodriguez-Valera F."/>
        </authorList>
    </citation>
    <scope>NUCLEOTIDE SEQUENCE [LARGE SCALE GENOMIC DNA]</scope>
    <source>
        <strain>DSM 17117 / CIP 110805 / LMG 28347 / Deep ecotype</strain>
    </source>
</reference>
<feature type="chain" id="PRO_1000146642" description="Sulfite reductase [NADPH] hemoprotein beta-component">
    <location>
        <begin position="1"/>
        <end position="573"/>
    </location>
</feature>
<feature type="binding site" evidence="1">
    <location>
        <position position="436"/>
    </location>
    <ligand>
        <name>[4Fe-4S] cluster</name>
        <dbReference type="ChEBI" id="CHEBI:49883"/>
    </ligand>
</feature>
<feature type="binding site" evidence="1">
    <location>
        <position position="442"/>
    </location>
    <ligand>
        <name>[4Fe-4S] cluster</name>
        <dbReference type="ChEBI" id="CHEBI:49883"/>
    </ligand>
</feature>
<feature type="binding site" evidence="1">
    <location>
        <position position="481"/>
    </location>
    <ligand>
        <name>[4Fe-4S] cluster</name>
        <dbReference type="ChEBI" id="CHEBI:49883"/>
    </ligand>
</feature>
<feature type="binding site" evidence="1">
    <location>
        <position position="485"/>
    </location>
    <ligand>
        <name>[4Fe-4S] cluster</name>
        <dbReference type="ChEBI" id="CHEBI:49883"/>
    </ligand>
</feature>
<feature type="binding site" description="axial binding residue" evidence="1">
    <location>
        <position position="485"/>
    </location>
    <ligand>
        <name>siroheme</name>
        <dbReference type="ChEBI" id="CHEBI:60052"/>
    </ligand>
    <ligandPart>
        <name>Fe</name>
        <dbReference type="ChEBI" id="CHEBI:18248"/>
    </ligandPart>
</feature>
<name>CYSI_ALTMD</name>
<gene>
    <name evidence="1" type="primary">cysI</name>
    <name type="ordered locus">MADE_1016735</name>
</gene>
<keyword id="KW-0004">4Fe-4S</keyword>
<keyword id="KW-0028">Amino-acid biosynthesis</keyword>
<keyword id="KW-0198">Cysteine biosynthesis</keyword>
<keyword id="KW-0349">Heme</keyword>
<keyword id="KW-0408">Iron</keyword>
<keyword id="KW-0411">Iron-sulfur</keyword>
<keyword id="KW-0479">Metal-binding</keyword>
<keyword id="KW-0521">NADP</keyword>
<keyword id="KW-0560">Oxidoreductase</keyword>
<dbReference type="EC" id="1.8.1.2" evidence="1"/>
<dbReference type="EMBL" id="CP001103">
    <property type="protein sequence ID" value="AEA99471.1"/>
    <property type="molecule type" value="Genomic_DNA"/>
</dbReference>
<dbReference type="RefSeq" id="WP_012519759.1">
    <property type="nucleotide sequence ID" value="NC_011138.3"/>
</dbReference>
<dbReference type="SMR" id="B4RYS6"/>
<dbReference type="KEGG" id="amc:MADE_1016735"/>
<dbReference type="HOGENOM" id="CLU_001975_3_2_6"/>
<dbReference type="UniPathway" id="UPA00140">
    <property type="reaction ID" value="UER00207"/>
</dbReference>
<dbReference type="Proteomes" id="UP000001870">
    <property type="component" value="Chromosome"/>
</dbReference>
<dbReference type="GO" id="GO:0009337">
    <property type="term" value="C:sulfite reductase complex (NADPH)"/>
    <property type="evidence" value="ECO:0007669"/>
    <property type="project" value="InterPro"/>
</dbReference>
<dbReference type="GO" id="GO:0051539">
    <property type="term" value="F:4 iron, 4 sulfur cluster binding"/>
    <property type="evidence" value="ECO:0007669"/>
    <property type="project" value="UniProtKB-KW"/>
</dbReference>
<dbReference type="GO" id="GO:0020037">
    <property type="term" value="F:heme binding"/>
    <property type="evidence" value="ECO:0007669"/>
    <property type="project" value="InterPro"/>
</dbReference>
<dbReference type="GO" id="GO:0046872">
    <property type="term" value="F:metal ion binding"/>
    <property type="evidence" value="ECO:0007669"/>
    <property type="project" value="UniProtKB-KW"/>
</dbReference>
<dbReference type="GO" id="GO:0050661">
    <property type="term" value="F:NADP binding"/>
    <property type="evidence" value="ECO:0007669"/>
    <property type="project" value="InterPro"/>
</dbReference>
<dbReference type="GO" id="GO:0050311">
    <property type="term" value="F:sulfite reductase (ferredoxin) activity"/>
    <property type="evidence" value="ECO:0007669"/>
    <property type="project" value="TreeGrafter"/>
</dbReference>
<dbReference type="GO" id="GO:0004783">
    <property type="term" value="F:sulfite reductase (NADPH) activity"/>
    <property type="evidence" value="ECO:0007669"/>
    <property type="project" value="UniProtKB-UniRule"/>
</dbReference>
<dbReference type="GO" id="GO:0019344">
    <property type="term" value="P:cysteine biosynthetic process"/>
    <property type="evidence" value="ECO:0007669"/>
    <property type="project" value="UniProtKB-KW"/>
</dbReference>
<dbReference type="GO" id="GO:0070814">
    <property type="term" value="P:hydrogen sulfide biosynthetic process"/>
    <property type="evidence" value="ECO:0007669"/>
    <property type="project" value="UniProtKB-UniRule"/>
</dbReference>
<dbReference type="GO" id="GO:0000103">
    <property type="term" value="P:sulfate assimilation"/>
    <property type="evidence" value="ECO:0007669"/>
    <property type="project" value="UniProtKB-UniRule"/>
</dbReference>
<dbReference type="FunFam" id="3.30.413.10:FF:000003">
    <property type="entry name" value="Sulfite reductase [NADPH] hemoprotein beta-component"/>
    <property type="match status" value="1"/>
</dbReference>
<dbReference type="FunFam" id="3.30.413.10:FF:000004">
    <property type="entry name" value="Sulfite reductase [NADPH] hemoprotein beta-component"/>
    <property type="match status" value="1"/>
</dbReference>
<dbReference type="Gene3D" id="3.30.413.10">
    <property type="entry name" value="Sulfite Reductase Hemoprotein, domain 1"/>
    <property type="match status" value="2"/>
</dbReference>
<dbReference type="HAMAP" id="MF_01540">
    <property type="entry name" value="CysI"/>
    <property type="match status" value="1"/>
</dbReference>
<dbReference type="InterPro" id="IPR011786">
    <property type="entry name" value="CysI"/>
</dbReference>
<dbReference type="InterPro" id="IPR005117">
    <property type="entry name" value="NiRdtase/SiRdtase_haem-b_fer"/>
</dbReference>
<dbReference type="InterPro" id="IPR036136">
    <property type="entry name" value="Nit/Sulf_reduc_fer-like_dom_sf"/>
</dbReference>
<dbReference type="InterPro" id="IPR006067">
    <property type="entry name" value="NO2/SO3_Rdtase_4Fe4S_dom"/>
</dbReference>
<dbReference type="InterPro" id="IPR045169">
    <property type="entry name" value="NO2/SO3_Rdtase_4Fe4S_prot"/>
</dbReference>
<dbReference type="InterPro" id="IPR045854">
    <property type="entry name" value="NO2/SO3_Rdtase_4Fe4S_sf"/>
</dbReference>
<dbReference type="InterPro" id="IPR006066">
    <property type="entry name" value="NO2/SO3_Rdtase_FeS/sirohaem_BS"/>
</dbReference>
<dbReference type="NCBIfam" id="TIGR02041">
    <property type="entry name" value="CysI"/>
    <property type="match status" value="1"/>
</dbReference>
<dbReference type="NCBIfam" id="NF010029">
    <property type="entry name" value="PRK13504.1"/>
    <property type="match status" value="1"/>
</dbReference>
<dbReference type="PANTHER" id="PTHR11493:SF47">
    <property type="entry name" value="SULFITE REDUCTASE [NADPH] SUBUNIT BETA"/>
    <property type="match status" value="1"/>
</dbReference>
<dbReference type="PANTHER" id="PTHR11493">
    <property type="entry name" value="SULFITE REDUCTASE [NADPH] SUBUNIT BETA-RELATED"/>
    <property type="match status" value="1"/>
</dbReference>
<dbReference type="Pfam" id="PF01077">
    <property type="entry name" value="NIR_SIR"/>
    <property type="match status" value="1"/>
</dbReference>
<dbReference type="Pfam" id="PF03460">
    <property type="entry name" value="NIR_SIR_ferr"/>
    <property type="match status" value="2"/>
</dbReference>
<dbReference type="PRINTS" id="PR00397">
    <property type="entry name" value="SIROHAEM"/>
</dbReference>
<dbReference type="SUPFAM" id="SSF56014">
    <property type="entry name" value="Nitrite and sulphite reductase 4Fe-4S domain-like"/>
    <property type="match status" value="2"/>
</dbReference>
<dbReference type="SUPFAM" id="SSF55124">
    <property type="entry name" value="Nitrite/Sulfite reductase N-terminal domain-like"/>
    <property type="match status" value="2"/>
</dbReference>
<dbReference type="PROSITE" id="PS00365">
    <property type="entry name" value="NIR_SIR"/>
    <property type="match status" value="1"/>
</dbReference>
<protein>
    <recommendedName>
        <fullName evidence="1">Sulfite reductase [NADPH] hemoprotein beta-component</fullName>
        <shortName evidence="1">SiR-HP</shortName>
        <shortName evidence="1">SiRHP</shortName>
        <ecNumber evidence="1">1.8.1.2</ecNumber>
    </recommendedName>
</protein>
<evidence type="ECO:0000255" key="1">
    <source>
        <dbReference type="HAMAP-Rule" id="MF_01540"/>
    </source>
</evidence>
<organism>
    <name type="scientific">Alteromonas mediterranea (strain DSM 17117 / CIP 110805 / LMG 28347 / Deep ecotype)</name>
    <dbReference type="NCBI Taxonomy" id="1774373"/>
    <lineage>
        <taxon>Bacteria</taxon>
        <taxon>Pseudomonadati</taxon>
        <taxon>Pseudomonadota</taxon>
        <taxon>Gammaproteobacteria</taxon>
        <taxon>Alteromonadales</taxon>
        <taxon>Alteromonadaceae</taxon>
        <taxon>Alteromonas/Salinimonas group</taxon>
        <taxon>Alteromonas</taxon>
    </lineage>
</organism>
<proteinExistence type="inferred from homology"/>
<sequence length="573" mass="63913">MSNEKSPFIVEGKLADNERLKRESNNLRGTITTDLKDDLTGGFTADNFQLIRFHGMYQQDDRDIRAERAKQKLEPLHNVMLRARLPGGVITPDQWLAIDKFADDHTMYGSIRLTTRQTFQFHGVLKPQIKLMHQTLNKVGIDSIATAGDVNRNVLCTSNPVESELHLHAYEWAKKISEHLLPKTRAYAEIWLDGEKVETTEKPVEPILGDNYLPRKFKTTVVIPPQNDVDVHANDLNFVAIAENGQLVGFNVLVGGGLAMTHGDKSTYPRKASDFGFIPLENTLDVAAAVVTTQRDWGNRVNRKNAKTKYTLERVGVDNFKAEVEKRAGVTFQESRPYEFTDRGDRFGWVEGIDGKYHLTVFIENGRILDYPGKTLKTGCAEIAKIHKGDFRLTANQNLIIAGVPPQDKDKIEALAREHGLIAPSISNQRLDSMACVALPTCPLAMAEAERYLPDAVTELEGLLAKHGLEEDSVIFRVTGCPNGCGRAMLSEVGLVGKGPGKYNLHLGGNREGTRIPRMYRENISEQEIMAELDTLLGQWAKERDSGEAFGDYVVRAGVVKPVVDSARDFYDQ</sequence>
<comment type="function">
    <text evidence="1">Component of the sulfite reductase complex that catalyzes the 6-electron reduction of sulfite to sulfide. This is one of several activities required for the biosynthesis of L-cysteine from sulfate.</text>
</comment>
<comment type="catalytic activity">
    <reaction evidence="1">
        <text>hydrogen sulfide + 3 NADP(+) + 3 H2O = sulfite + 3 NADPH + 4 H(+)</text>
        <dbReference type="Rhea" id="RHEA:13801"/>
        <dbReference type="ChEBI" id="CHEBI:15377"/>
        <dbReference type="ChEBI" id="CHEBI:15378"/>
        <dbReference type="ChEBI" id="CHEBI:17359"/>
        <dbReference type="ChEBI" id="CHEBI:29919"/>
        <dbReference type="ChEBI" id="CHEBI:57783"/>
        <dbReference type="ChEBI" id="CHEBI:58349"/>
        <dbReference type="EC" id="1.8.1.2"/>
    </reaction>
</comment>
<comment type="cofactor">
    <cofactor evidence="1">
        <name>siroheme</name>
        <dbReference type="ChEBI" id="CHEBI:60052"/>
    </cofactor>
    <text evidence="1">Binds 1 siroheme per subunit.</text>
</comment>
<comment type="cofactor">
    <cofactor evidence="1">
        <name>[4Fe-4S] cluster</name>
        <dbReference type="ChEBI" id="CHEBI:49883"/>
    </cofactor>
    <text evidence="1">Binds 1 [4Fe-4S] cluster per subunit.</text>
</comment>
<comment type="pathway">
    <text evidence="1">Sulfur metabolism; hydrogen sulfide biosynthesis; hydrogen sulfide from sulfite (NADPH route): step 1/1.</text>
</comment>
<comment type="subunit">
    <text evidence="1">Alpha(8)-beta(8). The alpha component is a flavoprotein, the beta component is a hemoprotein.</text>
</comment>
<comment type="similarity">
    <text evidence="1">Belongs to the nitrite and sulfite reductase 4Fe-4S domain family.</text>
</comment>
<accession>B4RYS6</accession>
<accession>F2G4G1</accession>